<evidence type="ECO:0000255" key="1">
    <source>
        <dbReference type="HAMAP-Rule" id="MF_01694"/>
    </source>
</evidence>
<evidence type="ECO:0000255" key="2">
    <source>
        <dbReference type="PROSITE-ProRule" id="PRU01266"/>
    </source>
</evidence>
<organism>
    <name type="scientific">Salmonella gallinarum (strain 287/91 / NCTC 13346)</name>
    <dbReference type="NCBI Taxonomy" id="550538"/>
    <lineage>
        <taxon>Bacteria</taxon>
        <taxon>Pseudomonadati</taxon>
        <taxon>Pseudomonadota</taxon>
        <taxon>Gammaproteobacteria</taxon>
        <taxon>Enterobacterales</taxon>
        <taxon>Enterobacteriaceae</taxon>
        <taxon>Salmonella</taxon>
    </lineage>
</organism>
<comment type="function">
    <text evidence="1">Catalyzes the conversion of dethiobiotin (DTB) to biotin by the insertion of a sulfur atom into dethiobiotin via a radical-based mechanism.</text>
</comment>
<comment type="catalytic activity">
    <reaction evidence="1">
        <text>(4R,5S)-dethiobiotin + (sulfur carrier)-SH + 2 reduced [2Fe-2S]-[ferredoxin] + 2 S-adenosyl-L-methionine = (sulfur carrier)-H + biotin + 2 5'-deoxyadenosine + 2 L-methionine + 2 oxidized [2Fe-2S]-[ferredoxin]</text>
        <dbReference type="Rhea" id="RHEA:22060"/>
        <dbReference type="Rhea" id="RHEA-COMP:10000"/>
        <dbReference type="Rhea" id="RHEA-COMP:10001"/>
        <dbReference type="Rhea" id="RHEA-COMP:14737"/>
        <dbReference type="Rhea" id="RHEA-COMP:14739"/>
        <dbReference type="ChEBI" id="CHEBI:17319"/>
        <dbReference type="ChEBI" id="CHEBI:29917"/>
        <dbReference type="ChEBI" id="CHEBI:33737"/>
        <dbReference type="ChEBI" id="CHEBI:33738"/>
        <dbReference type="ChEBI" id="CHEBI:57586"/>
        <dbReference type="ChEBI" id="CHEBI:57844"/>
        <dbReference type="ChEBI" id="CHEBI:59789"/>
        <dbReference type="ChEBI" id="CHEBI:64428"/>
        <dbReference type="ChEBI" id="CHEBI:149473"/>
        <dbReference type="EC" id="2.8.1.6"/>
    </reaction>
</comment>
<comment type="cofactor">
    <cofactor evidence="1">
        <name>[4Fe-4S] cluster</name>
        <dbReference type="ChEBI" id="CHEBI:49883"/>
    </cofactor>
    <text evidence="1">Binds 1 [4Fe-4S] cluster. The cluster is coordinated with 3 cysteines and an exchangeable S-adenosyl-L-methionine.</text>
</comment>
<comment type="cofactor">
    <cofactor evidence="1">
        <name>[2Fe-2S] cluster</name>
        <dbReference type="ChEBI" id="CHEBI:190135"/>
    </cofactor>
    <text evidence="1">Binds 1 [2Fe-2S] cluster. The cluster is coordinated with 3 cysteines and 1 arginine.</text>
</comment>
<comment type="pathway">
    <text evidence="1">Cofactor biosynthesis; biotin biosynthesis; biotin from 7,8-diaminononanoate: step 2/2.</text>
</comment>
<comment type="subunit">
    <text evidence="1">Homodimer.</text>
</comment>
<comment type="similarity">
    <text evidence="1">Belongs to the radical SAM superfamily. Biotin synthase family.</text>
</comment>
<proteinExistence type="inferred from homology"/>
<gene>
    <name evidence="1" type="primary">bioB</name>
    <name type="ordered locus">SG0772</name>
</gene>
<name>BIOB_SALG2</name>
<dbReference type="EC" id="2.8.1.6" evidence="1"/>
<dbReference type="EMBL" id="AM933173">
    <property type="protein sequence ID" value="CAR36668.1"/>
    <property type="molecule type" value="Genomic_DNA"/>
</dbReference>
<dbReference type="RefSeq" id="WP_000090723.1">
    <property type="nucleotide sequence ID" value="NC_011274.1"/>
</dbReference>
<dbReference type="SMR" id="B5R761"/>
<dbReference type="KEGG" id="seg:SG0772"/>
<dbReference type="HOGENOM" id="CLU_033172_1_2_6"/>
<dbReference type="UniPathway" id="UPA00078">
    <property type="reaction ID" value="UER00162"/>
</dbReference>
<dbReference type="Proteomes" id="UP000008321">
    <property type="component" value="Chromosome"/>
</dbReference>
<dbReference type="GO" id="GO:0051537">
    <property type="term" value="F:2 iron, 2 sulfur cluster binding"/>
    <property type="evidence" value="ECO:0007669"/>
    <property type="project" value="UniProtKB-KW"/>
</dbReference>
<dbReference type="GO" id="GO:0051539">
    <property type="term" value="F:4 iron, 4 sulfur cluster binding"/>
    <property type="evidence" value="ECO:0007669"/>
    <property type="project" value="UniProtKB-KW"/>
</dbReference>
<dbReference type="GO" id="GO:0004076">
    <property type="term" value="F:biotin synthase activity"/>
    <property type="evidence" value="ECO:0007669"/>
    <property type="project" value="UniProtKB-UniRule"/>
</dbReference>
<dbReference type="GO" id="GO:0005506">
    <property type="term" value="F:iron ion binding"/>
    <property type="evidence" value="ECO:0007669"/>
    <property type="project" value="UniProtKB-UniRule"/>
</dbReference>
<dbReference type="GO" id="GO:0009102">
    <property type="term" value="P:biotin biosynthetic process"/>
    <property type="evidence" value="ECO:0007669"/>
    <property type="project" value="UniProtKB-UniRule"/>
</dbReference>
<dbReference type="CDD" id="cd01335">
    <property type="entry name" value="Radical_SAM"/>
    <property type="match status" value="1"/>
</dbReference>
<dbReference type="FunFam" id="3.20.20.70:FF:000011">
    <property type="entry name" value="Biotin synthase"/>
    <property type="match status" value="1"/>
</dbReference>
<dbReference type="Gene3D" id="3.20.20.70">
    <property type="entry name" value="Aldolase class I"/>
    <property type="match status" value="1"/>
</dbReference>
<dbReference type="HAMAP" id="MF_01694">
    <property type="entry name" value="BioB"/>
    <property type="match status" value="1"/>
</dbReference>
<dbReference type="InterPro" id="IPR013785">
    <property type="entry name" value="Aldolase_TIM"/>
</dbReference>
<dbReference type="InterPro" id="IPR010722">
    <property type="entry name" value="BATS_dom"/>
</dbReference>
<dbReference type="InterPro" id="IPR002684">
    <property type="entry name" value="Biotin_synth/BioAB"/>
</dbReference>
<dbReference type="InterPro" id="IPR024177">
    <property type="entry name" value="Biotin_synthase"/>
</dbReference>
<dbReference type="InterPro" id="IPR006638">
    <property type="entry name" value="Elp3/MiaA/NifB-like_rSAM"/>
</dbReference>
<dbReference type="InterPro" id="IPR007197">
    <property type="entry name" value="rSAM"/>
</dbReference>
<dbReference type="NCBIfam" id="TIGR00433">
    <property type="entry name" value="bioB"/>
    <property type="match status" value="1"/>
</dbReference>
<dbReference type="PANTHER" id="PTHR22976">
    <property type="entry name" value="BIOTIN SYNTHASE"/>
    <property type="match status" value="1"/>
</dbReference>
<dbReference type="PANTHER" id="PTHR22976:SF2">
    <property type="entry name" value="BIOTIN SYNTHASE, MITOCHONDRIAL"/>
    <property type="match status" value="1"/>
</dbReference>
<dbReference type="Pfam" id="PF06968">
    <property type="entry name" value="BATS"/>
    <property type="match status" value="1"/>
</dbReference>
<dbReference type="Pfam" id="PF04055">
    <property type="entry name" value="Radical_SAM"/>
    <property type="match status" value="1"/>
</dbReference>
<dbReference type="PIRSF" id="PIRSF001619">
    <property type="entry name" value="Biotin_synth"/>
    <property type="match status" value="1"/>
</dbReference>
<dbReference type="SFLD" id="SFLDF00272">
    <property type="entry name" value="biotin_synthase"/>
    <property type="match status" value="1"/>
</dbReference>
<dbReference type="SFLD" id="SFLDS00029">
    <property type="entry name" value="Radical_SAM"/>
    <property type="match status" value="1"/>
</dbReference>
<dbReference type="SMART" id="SM00876">
    <property type="entry name" value="BATS"/>
    <property type="match status" value="1"/>
</dbReference>
<dbReference type="SMART" id="SM00729">
    <property type="entry name" value="Elp3"/>
    <property type="match status" value="1"/>
</dbReference>
<dbReference type="SUPFAM" id="SSF102114">
    <property type="entry name" value="Radical SAM enzymes"/>
    <property type="match status" value="1"/>
</dbReference>
<dbReference type="PROSITE" id="PS51918">
    <property type="entry name" value="RADICAL_SAM"/>
    <property type="match status" value="1"/>
</dbReference>
<sequence>MARHPRWTLSQVTELFEKPLLELLFEAQQIHRQHFDPQQVQVSTLLSIKTGACPEDCKYCPQSSRYKTGLEAERLMAVEQVLDSARKAKNAGSTRFCMGAAWKNPHERDMPYLEQIVQGVKAMGLETCMTLGMLNESQAQRLANAGLDYYNHNLDTSPEFYGNIITTRTYQERLDTLEKVREAGIKVCSGGIVGLGETVTDRAGLLLQLANLPTPPESVPINMLVKVKGTPLADNDDVDAFDFIRTIAVARIMMPTSYVRLSAGREQMNEQTQAMCFMAGANSIFYGCKLLTTPNPAEDKDLQLFRKLGLNPQQTRVLAGDNEQQQRLEQTLMTPDTDDYYNAAAL</sequence>
<reference key="1">
    <citation type="journal article" date="2008" name="Genome Res.">
        <title>Comparative genome analysis of Salmonella enteritidis PT4 and Salmonella gallinarum 287/91 provides insights into evolutionary and host adaptation pathways.</title>
        <authorList>
            <person name="Thomson N.R."/>
            <person name="Clayton D.J."/>
            <person name="Windhorst D."/>
            <person name="Vernikos G."/>
            <person name="Davidson S."/>
            <person name="Churcher C."/>
            <person name="Quail M.A."/>
            <person name="Stevens M."/>
            <person name="Jones M.A."/>
            <person name="Watson M."/>
            <person name="Barron A."/>
            <person name="Layton A."/>
            <person name="Pickard D."/>
            <person name="Kingsley R.A."/>
            <person name="Bignell A."/>
            <person name="Clark L."/>
            <person name="Harris B."/>
            <person name="Ormond D."/>
            <person name="Abdellah Z."/>
            <person name="Brooks K."/>
            <person name="Cherevach I."/>
            <person name="Chillingworth T."/>
            <person name="Woodward J."/>
            <person name="Norberczak H."/>
            <person name="Lord A."/>
            <person name="Arrowsmith C."/>
            <person name="Jagels K."/>
            <person name="Moule S."/>
            <person name="Mungall K."/>
            <person name="Saunders M."/>
            <person name="Whitehead S."/>
            <person name="Chabalgoity J.A."/>
            <person name="Maskell D."/>
            <person name="Humphreys T."/>
            <person name="Roberts M."/>
            <person name="Barrow P.A."/>
            <person name="Dougan G."/>
            <person name="Parkhill J."/>
        </authorList>
    </citation>
    <scope>NUCLEOTIDE SEQUENCE [LARGE SCALE GENOMIC DNA]</scope>
    <source>
        <strain>287/91 / NCTC 13346</strain>
    </source>
</reference>
<keyword id="KW-0001">2Fe-2S</keyword>
<keyword id="KW-0004">4Fe-4S</keyword>
<keyword id="KW-0093">Biotin biosynthesis</keyword>
<keyword id="KW-0408">Iron</keyword>
<keyword id="KW-0411">Iron-sulfur</keyword>
<keyword id="KW-0479">Metal-binding</keyword>
<keyword id="KW-0949">S-adenosyl-L-methionine</keyword>
<keyword id="KW-0808">Transferase</keyword>
<protein>
    <recommendedName>
        <fullName evidence="1">Biotin synthase</fullName>
        <ecNumber evidence="1">2.8.1.6</ecNumber>
    </recommendedName>
</protein>
<accession>B5R761</accession>
<feature type="chain" id="PRO_0000381600" description="Biotin synthase">
    <location>
        <begin position="1"/>
        <end position="346"/>
    </location>
</feature>
<feature type="domain" description="Radical SAM core" evidence="2">
    <location>
        <begin position="38"/>
        <end position="256"/>
    </location>
</feature>
<feature type="binding site" evidence="1">
    <location>
        <position position="53"/>
    </location>
    <ligand>
        <name>[4Fe-4S] cluster</name>
        <dbReference type="ChEBI" id="CHEBI:49883"/>
        <note>4Fe-4S-S-AdoMet</note>
    </ligand>
</feature>
<feature type="binding site" evidence="1">
    <location>
        <position position="57"/>
    </location>
    <ligand>
        <name>[4Fe-4S] cluster</name>
        <dbReference type="ChEBI" id="CHEBI:49883"/>
        <note>4Fe-4S-S-AdoMet</note>
    </ligand>
</feature>
<feature type="binding site" evidence="1">
    <location>
        <position position="60"/>
    </location>
    <ligand>
        <name>[4Fe-4S] cluster</name>
        <dbReference type="ChEBI" id="CHEBI:49883"/>
        <note>4Fe-4S-S-AdoMet</note>
    </ligand>
</feature>
<feature type="binding site" evidence="1">
    <location>
        <position position="97"/>
    </location>
    <ligand>
        <name>[2Fe-2S] cluster</name>
        <dbReference type="ChEBI" id="CHEBI:190135"/>
    </ligand>
</feature>
<feature type="binding site" evidence="1">
    <location>
        <position position="128"/>
    </location>
    <ligand>
        <name>[2Fe-2S] cluster</name>
        <dbReference type="ChEBI" id="CHEBI:190135"/>
    </ligand>
</feature>
<feature type="binding site" evidence="1">
    <location>
        <position position="188"/>
    </location>
    <ligand>
        <name>[2Fe-2S] cluster</name>
        <dbReference type="ChEBI" id="CHEBI:190135"/>
    </ligand>
</feature>
<feature type="binding site" evidence="1">
    <location>
        <position position="260"/>
    </location>
    <ligand>
        <name>[2Fe-2S] cluster</name>
        <dbReference type="ChEBI" id="CHEBI:190135"/>
    </ligand>
</feature>